<gene>
    <name evidence="1" type="primary">gatE</name>
    <name type="ordered locus">STK_12620</name>
</gene>
<name>GATE_SULTO</name>
<feature type="chain" id="PRO_0000140083" description="Glutamyl-tRNA(Gln) amidotransferase subunit E">
    <location>
        <begin position="1"/>
        <end position="628"/>
    </location>
</feature>
<proteinExistence type="inferred from homology"/>
<accession>Q971W7</accession>
<evidence type="ECO:0000255" key="1">
    <source>
        <dbReference type="HAMAP-Rule" id="MF_00588"/>
    </source>
</evidence>
<dbReference type="EC" id="6.3.5.-" evidence="1"/>
<dbReference type="EMBL" id="BA000023">
    <property type="protein sequence ID" value="BAB66303.1"/>
    <property type="molecule type" value="Genomic_DNA"/>
</dbReference>
<dbReference type="RefSeq" id="WP_010979281.1">
    <property type="nucleotide sequence ID" value="NC_003106.2"/>
</dbReference>
<dbReference type="SMR" id="Q971W7"/>
<dbReference type="STRING" id="273063.STK_12620"/>
<dbReference type="GeneID" id="1459261"/>
<dbReference type="KEGG" id="sto:STK_12620"/>
<dbReference type="PATRIC" id="fig|273063.9.peg.1420"/>
<dbReference type="eggNOG" id="arCOG01719">
    <property type="taxonomic scope" value="Archaea"/>
</dbReference>
<dbReference type="OrthoDB" id="7316at2157"/>
<dbReference type="Proteomes" id="UP000001015">
    <property type="component" value="Chromosome"/>
</dbReference>
<dbReference type="GO" id="GO:0005737">
    <property type="term" value="C:cytoplasm"/>
    <property type="evidence" value="ECO:0007669"/>
    <property type="project" value="InterPro"/>
</dbReference>
<dbReference type="GO" id="GO:0004812">
    <property type="term" value="F:aminoacyl-tRNA ligase activity"/>
    <property type="evidence" value="ECO:0007669"/>
    <property type="project" value="InterPro"/>
</dbReference>
<dbReference type="GO" id="GO:0005524">
    <property type="term" value="F:ATP binding"/>
    <property type="evidence" value="ECO:0007669"/>
    <property type="project" value="UniProtKB-KW"/>
</dbReference>
<dbReference type="GO" id="GO:0050567">
    <property type="term" value="F:glutaminyl-tRNA synthase (glutamine-hydrolyzing) activity"/>
    <property type="evidence" value="ECO:0007669"/>
    <property type="project" value="UniProtKB-UniRule"/>
</dbReference>
<dbReference type="GO" id="GO:0070681">
    <property type="term" value="P:glutaminyl-tRNAGln biosynthesis via transamidation"/>
    <property type="evidence" value="ECO:0007669"/>
    <property type="project" value="TreeGrafter"/>
</dbReference>
<dbReference type="GO" id="GO:0006412">
    <property type="term" value="P:translation"/>
    <property type="evidence" value="ECO:0007669"/>
    <property type="project" value="UniProtKB-UniRule"/>
</dbReference>
<dbReference type="FunFam" id="3.30.1360.30:FF:000003">
    <property type="entry name" value="Glutamyl-tRNA(Gln) amidotransferase subunit E"/>
    <property type="match status" value="1"/>
</dbReference>
<dbReference type="Gene3D" id="1.10.10.410">
    <property type="match status" value="1"/>
</dbReference>
<dbReference type="Gene3D" id="3.30.1360.30">
    <property type="entry name" value="GAD-like domain"/>
    <property type="match status" value="1"/>
</dbReference>
<dbReference type="Gene3D" id="1.10.150.380">
    <property type="entry name" value="GatB domain, N-terminal subdomain"/>
    <property type="match status" value="1"/>
</dbReference>
<dbReference type="HAMAP" id="MF_00588">
    <property type="entry name" value="GatE"/>
    <property type="match status" value="1"/>
</dbReference>
<dbReference type="InterPro" id="IPR017959">
    <property type="entry name" value="Asn/Gln-tRNA_amidoTrfase_suB/E"/>
</dbReference>
<dbReference type="InterPro" id="IPR006075">
    <property type="entry name" value="Asn/Gln-tRNA_Trfase_suB/E_cat"/>
</dbReference>
<dbReference type="InterPro" id="IPR018027">
    <property type="entry name" value="Asn/Gln_amidotransferase"/>
</dbReference>
<dbReference type="InterPro" id="IPR003789">
    <property type="entry name" value="Asn/Gln_tRNA_amidoTrase-B-like"/>
</dbReference>
<dbReference type="InterPro" id="IPR004115">
    <property type="entry name" value="GAD-like_sf"/>
</dbReference>
<dbReference type="InterPro" id="IPR029351">
    <property type="entry name" value="GAD_dom"/>
</dbReference>
<dbReference type="InterPro" id="IPR042114">
    <property type="entry name" value="GatB_C_1"/>
</dbReference>
<dbReference type="InterPro" id="IPR023168">
    <property type="entry name" value="GatB_Yqey_C_2"/>
</dbReference>
<dbReference type="InterPro" id="IPR004414">
    <property type="entry name" value="GatE"/>
</dbReference>
<dbReference type="InterPro" id="IPR017958">
    <property type="entry name" value="Gln-tRNA_amidoTrfase_suB_CS"/>
</dbReference>
<dbReference type="InterPro" id="IPR014746">
    <property type="entry name" value="Gln_synth/guanido_kin_cat_dom"/>
</dbReference>
<dbReference type="NCBIfam" id="TIGR00134">
    <property type="entry name" value="gatE_arch"/>
    <property type="match status" value="1"/>
</dbReference>
<dbReference type="NCBIfam" id="NF003107">
    <property type="entry name" value="PRK04028.1"/>
    <property type="match status" value="1"/>
</dbReference>
<dbReference type="PANTHER" id="PTHR11659">
    <property type="entry name" value="GLUTAMYL-TRNA GLN AMIDOTRANSFERASE SUBUNIT B MITOCHONDRIAL AND PROKARYOTIC PET112-RELATED"/>
    <property type="match status" value="1"/>
</dbReference>
<dbReference type="PANTHER" id="PTHR11659:SF2">
    <property type="entry name" value="GLUTAMYL-TRNA(GLN) AMIDOTRANSFERASE SUBUNIT E"/>
    <property type="match status" value="1"/>
</dbReference>
<dbReference type="Pfam" id="PF02938">
    <property type="entry name" value="GAD"/>
    <property type="match status" value="1"/>
</dbReference>
<dbReference type="Pfam" id="PF02934">
    <property type="entry name" value="GatB_N"/>
    <property type="match status" value="1"/>
</dbReference>
<dbReference type="Pfam" id="PF02637">
    <property type="entry name" value="GatB_Yqey"/>
    <property type="match status" value="1"/>
</dbReference>
<dbReference type="SMART" id="SM00845">
    <property type="entry name" value="GatB_Yqey"/>
    <property type="match status" value="1"/>
</dbReference>
<dbReference type="SUPFAM" id="SSF55261">
    <property type="entry name" value="GAD domain-like"/>
    <property type="match status" value="1"/>
</dbReference>
<dbReference type="SUPFAM" id="SSF89095">
    <property type="entry name" value="GatB/YqeY motif"/>
    <property type="match status" value="1"/>
</dbReference>
<dbReference type="SUPFAM" id="SSF55931">
    <property type="entry name" value="Glutamine synthetase/guanido kinase"/>
    <property type="match status" value="1"/>
</dbReference>
<dbReference type="PROSITE" id="PS01234">
    <property type="entry name" value="GATB"/>
    <property type="match status" value="1"/>
</dbReference>
<keyword id="KW-0067">ATP-binding</keyword>
<keyword id="KW-0436">Ligase</keyword>
<keyword id="KW-0547">Nucleotide-binding</keyword>
<keyword id="KW-0648">Protein biosynthesis</keyword>
<keyword id="KW-1185">Reference proteome</keyword>
<reference key="1">
    <citation type="journal article" date="2001" name="DNA Res.">
        <title>Complete genome sequence of an aerobic thermoacidophilic Crenarchaeon, Sulfolobus tokodaii strain7.</title>
        <authorList>
            <person name="Kawarabayasi Y."/>
            <person name="Hino Y."/>
            <person name="Horikawa H."/>
            <person name="Jin-no K."/>
            <person name="Takahashi M."/>
            <person name="Sekine M."/>
            <person name="Baba S."/>
            <person name="Ankai A."/>
            <person name="Kosugi H."/>
            <person name="Hosoyama A."/>
            <person name="Fukui S."/>
            <person name="Nagai Y."/>
            <person name="Nishijima K."/>
            <person name="Otsuka R."/>
            <person name="Nakazawa H."/>
            <person name="Takamiya M."/>
            <person name="Kato Y."/>
            <person name="Yoshizawa T."/>
            <person name="Tanaka T."/>
            <person name="Kudoh Y."/>
            <person name="Yamazaki J."/>
            <person name="Kushida N."/>
            <person name="Oguchi A."/>
            <person name="Aoki K."/>
            <person name="Masuda S."/>
            <person name="Yanagii M."/>
            <person name="Nishimura M."/>
            <person name="Yamagishi A."/>
            <person name="Oshima T."/>
            <person name="Kikuchi H."/>
        </authorList>
    </citation>
    <scope>NUCLEOTIDE SEQUENCE [LARGE SCALE GENOMIC DNA]</scope>
    <source>
        <strain>DSM 16993 / JCM 10545 / NBRC 100140 / 7</strain>
    </source>
</reference>
<comment type="function">
    <text evidence="1">Allows the formation of correctly charged Gln-tRNA(Gln) through the transamidation of misacylated Glu-tRNA(Gln) in organisms which lack glutaminyl-tRNA synthetase. The reaction takes place in the presence of glutamine and ATP through an activated gamma-phospho-Glu-tRNA(Gln). The GatDE system is specific for glutamate and does not act on aspartate.</text>
</comment>
<comment type="catalytic activity">
    <reaction evidence="1">
        <text>L-glutamyl-tRNA(Gln) + L-glutamine + ATP + H2O = L-glutaminyl-tRNA(Gln) + L-glutamate + ADP + phosphate + H(+)</text>
        <dbReference type="Rhea" id="RHEA:17521"/>
        <dbReference type="Rhea" id="RHEA-COMP:9681"/>
        <dbReference type="Rhea" id="RHEA-COMP:9684"/>
        <dbReference type="ChEBI" id="CHEBI:15377"/>
        <dbReference type="ChEBI" id="CHEBI:15378"/>
        <dbReference type="ChEBI" id="CHEBI:29985"/>
        <dbReference type="ChEBI" id="CHEBI:30616"/>
        <dbReference type="ChEBI" id="CHEBI:43474"/>
        <dbReference type="ChEBI" id="CHEBI:58359"/>
        <dbReference type="ChEBI" id="CHEBI:78520"/>
        <dbReference type="ChEBI" id="CHEBI:78521"/>
        <dbReference type="ChEBI" id="CHEBI:456216"/>
    </reaction>
</comment>
<comment type="subunit">
    <text evidence="1">Heterodimer of GatD and GatE.</text>
</comment>
<comment type="similarity">
    <text evidence="1">Belongs to the GatB/GatE family. GatE subfamily.</text>
</comment>
<sequence length="628" mass="71366">MTELDYSKIGLKVGLEIHQQLNTAHKLFCECPTTLHEEYHTQLERYLRPSFSELGEIDIAALFEWQKGKKYVYRVPPNSCLVECDEEPPHIIDEEALSIAVAVSLALHSTLVDEVYVMRKIVIDGSNTSGFQRTAIISLGGYIEDNGQRIGIQTIALEEDAARKITDSPTEIIYNLDRLGIPLIEISTAPDIKTPEQAERVALKIGQLLRLTGRVKRGIGTIRQDLNVSIQGGVKTEIKGVQLLELIPDIIKNEARRQYELLRIKEELQKRNLNKDIVKNSFKIVDLTEEFKDTNSKIIRKELEKNGRIYGLKIAGFKGIFGWQLMPNRRFGTEVADYVRALAGLGGLFHSDELPNYGITKEEVEKVRKILQINENDAFIIIVGPKEKLDIATNTILDRILYAFDGVPKETRAALDDGTTKFMRPQPGSARMYPETDIPPRRIDERILELSKQFVPEQPEIKLKKLIELGLSKDLANTMLNSLRLDLFEELVKKYSPKVSPTFIASTLEITVKYVKSKGGDISVITDNILEELIKYVYEDKISKDAVQEILLELATSKTQLNEIIKKYTPLNETELEKIIIETIEENKKEIENKKDKAFNIIMSKVMNKVRGRADSKKVIELIKKHLG</sequence>
<organism>
    <name type="scientific">Sulfurisphaera tokodaii (strain DSM 16993 / JCM 10545 / NBRC 100140 / 7)</name>
    <name type="common">Sulfolobus tokodaii</name>
    <dbReference type="NCBI Taxonomy" id="273063"/>
    <lineage>
        <taxon>Archaea</taxon>
        <taxon>Thermoproteota</taxon>
        <taxon>Thermoprotei</taxon>
        <taxon>Sulfolobales</taxon>
        <taxon>Sulfolobaceae</taxon>
        <taxon>Sulfurisphaera</taxon>
    </lineage>
</organism>
<protein>
    <recommendedName>
        <fullName evidence="1">Glutamyl-tRNA(Gln) amidotransferase subunit E</fullName>
        <shortName evidence="1">Glu-ADT subunit E</shortName>
        <ecNumber evidence="1">6.3.5.-</ecNumber>
    </recommendedName>
</protein>